<comment type="function">
    <text evidence="2 3">Required, together with OPS, for embryo provasculature development and cotyledon vascular complexity and connectivity (PubMed:25149602). Necessary, partially redundantly with DEAL2 and DEAL3, to ensure bilateral symmetry development and early leaf margin patterning, probably via the regulation of auxin and CUC2 distribution (PubMed:29139551). Regulates cell proliferation but not cell expansion (PubMed:29139551).</text>
</comment>
<comment type="subunit">
    <text evidence="2">Interacts with OPS.</text>
</comment>
<comment type="subcellular location">
    <subcellularLocation>
        <location evidence="3">Endoplasmic reticulum membrane</location>
        <topology evidence="1">Multi-pass membrane protein</topology>
    </subcellularLocation>
</comment>
<comment type="tissue specificity">
    <text evidence="2 3">Expressed in vascular cells, mostly in hypocotyls, and, to a lower extent, in seedlings, roots, flowers, siliques, developing leaves and inflorescences, but barely in mature leaves and seeds (PubMed:25149602, PubMed:29139551). High levels in leaf primordia (PubMed:29139551).</text>
</comment>
<comment type="developmental stage">
    <text evidence="2 3">Mainly present in dividing tissues and fades out during cells differentiation, to reappear later in the vasculature (PubMed:29139551). Expressed in developing embryos and procambial, cambial, and vascular cells of cotyledons, leaves, roots, hypocotyls, and anthers (PubMed:25149602). During leaves development, first observed in leaf primordia, and becomes localized to the margins and the base of the lamina during the transition from cell proliferation to expansion and differentiation (PubMed:29139551). Later confined to petiole primordia (PubMed:29139551). Also detected in flower primordia (PubMed:29139551).</text>
</comment>
<comment type="disruption phenotype">
    <text evidence="2 3">Defects in vein connectivity early in mutant embryo development leading to reduced complexity of cotyledon vein networks and disconnected veins, including in embryos provasculatures (PubMed:25149602). The mutant deal1-1 exhibits a bilateral symmetry breaking but no obvious defects in dorsoventrality; early leaf primordia fail to acquire bilateral symmetry and instead form ectopic lobes and sinuses (PubMed:29139551). Developmental defects of pistils, some being bent or coiled or twisted, and some showing unfused carpels with exposed ovules (PubMed:29139551). In leaves, marginal cells expressing properly polarized PIN1 are badly recruited, thus leading to misplaced auxin maxima, as well as defects in cell proliferation but not in cell expansion (PubMed:29139551). Altered spatial pattern of CUC2 (PubMed:29139551). The double mutant vcc ops exhibits a complete loss of high-complexity vascular networks (PubMed:25149602). The vcc-3 deal2-1 and vcc-3 deal3-1 double mutants show leaf asymmetry (PubMed:29139551). The vcc-3 deal2-1 deal3-1 triple mutant shows a strong leaf asymmetry (PubMed:29139551).</text>
</comment>
<comment type="similarity">
    <text evidence="6">Belongs to the DESIGUAL family.</text>
</comment>
<accession>Q9ZV57</accession>
<accession>A0A178VR11</accession>
<sequence>MTKIGGILVCLVIVGLDVAAAILGIQAEVAQNQVKHMRLWLFECREPSQDAFRLGLGAAAILVMAHVLLNLVGGCLCICSQDEFQRSSSTRQISMACLVLTWIVFAVGFGSIVIGTMSNSKSRSSCGFTHHHFLSIGGILCFLHALFCVAYYVSATAAKDEAK</sequence>
<reference key="1">
    <citation type="journal article" date="1999" name="Nature">
        <title>Sequence and analysis of chromosome 2 of the plant Arabidopsis thaliana.</title>
        <authorList>
            <person name="Lin X."/>
            <person name="Kaul S."/>
            <person name="Rounsley S.D."/>
            <person name="Shea T.P."/>
            <person name="Benito M.-I."/>
            <person name="Town C.D."/>
            <person name="Fujii C.Y."/>
            <person name="Mason T.M."/>
            <person name="Bowman C.L."/>
            <person name="Barnstead M.E."/>
            <person name="Feldblyum T.V."/>
            <person name="Buell C.R."/>
            <person name="Ketchum K.A."/>
            <person name="Lee J.J."/>
            <person name="Ronning C.M."/>
            <person name="Koo H.L."/>
            <person name="Moffat K.S."/>
            <person name="Cronin L.A."/>
            <person name="Shen M."/>
            <person name="Pai G."/>
            <person name="Van Aken S."/>
            <person name="Umayam L."/>
            <person name="Tallon L.J."/>
            <person name="Gill J.E."/>
            <person name="Adams M.D."/>
            <person name="Carrera A.J."/>
            <person name="Creasy T.H."/>
            <person name="Goodman H.M."/>
            <person name="Somerville C.R."/>
            <person name="Copenhaver G.P."/>
            <person name="Preuss D."/>
            <person name="Nierman W.C."/>
            <person name="White O."/>
            <person name="Eisen J.A."/>
            <person name="Salzberg S.L."/>
            <person name="Fraser C.M."/>
            <person name="Venter J.C."/>
        </authorList>
    </citation>
    <scope>NUCLEOTIDE SEQUENCE [LARGE SCALE GENOMIC DNA]</scope>
    <source>
        <strain>cv. Columbia</strain>
    </source>
</reference>
<reference key="2">
    <citation type="journal article" date="2017" name="Plant J.">
        <title>Araport11: a complete reannotation of the Arabidopsis thaliana reference genome.</title>
        <authorList>
            <person name="Cheng C.Y."/>
            <person name="Krishnakumar V."/>
            <person name="Chan A.P."/>
            <person name="Thibaud-Nissen F."/>
            <person name="Schobel S."/>
            <person name="Town C.D."/>
        </authorList>
    </citation>
    <scope>GENOME REANNOTATION</scope>
    <source>
        <strain>cv. Columbia</strain>
    </source>
</reference>
<reference key="3">
    <citation type="submission" date="2004-02" db="EMBL/GenBank/DDBJ databases">
        <title>Arabidopsis ORF clones.</title>
        <authorList>
            <person name="Kim C.J."/>
            <person name="Chen H."/>
            <person name="Cheuk R.F."/>
            <person name="Shinn P."/>
            <person name="Ecker J.R."/>
        </authorList>
    </citation>
    <scope>NUCLEOTIDE SEQUENCE [LARGE SCALE MRNA]</scope>
    <source>
        <strain>cv. Columbia</strain>
    </source>
</reference>
<reference key="4">
    <citation type="submission" date="2004-09" db="EMBL/GenBank/DDBJ databases">
        <title>Large-scale analysis of RIKEN Arabidopsis full-length (RAFL) cDNAs.</title>
        <authorList>
            <person name="Totoki Y."/>
            <person name="Seki M."/>
            <person name="Ishida J."/>
            <person name="Nakajima M."/>
            <person name="Enju A."/>
            <person name="Kamiya A."/>
            <person name="Narusaka M."/>
            <person name="Shin-i T."/>
            <person name="Nakagawa M."/>
            <person name="Sakamoto N."/>
            <person name="Oishi K."/>
            <person name="Kohara Y."/>
            <person name="Kobayashi M."/>
            <person name="Toyoda A."/>
            <person name="Sakaki Y."/>
            <person name="Sakurai T."/>
            <person name="Iida K."/>
            <person name="Akiyama K."/>
            <person name="Satou M."/>
            <person name="Toyoda T."/>
            <person name="Konagaya A."/>
            <person name="Carninci P."/>
            <person name="Kawai J."/>
            <person name="Hayashizaki Y."/>
            <person name="Shinozaki K."/>
        </authorList>
    </citation>
    <scope>NUCLEOTIDE SEQUENCE [LARGE SCALE MRNA]</scope>
    <source>
        <strain>cv. Columbia</strain>
    </source>
</reference>
<reference key="5">
    <citation type="journal article" date="2014" name="Plant Physiol.">
        <title>The VASCULATURE COMPLEXITY AND CONNECTIVITY gene encodes a plant-specific protein required for embryo provasculature development.</title>
        <authorList>
            <person name="Roschzttardtz H."/>
            <person name="Paez-Valencia J."/>
            <person name="Dittakavi T."/>
            <person name="Jali S."/>
            <person name="Reyes F.C."/>
            <person name="Baisa G."/>
            <person name="Anne P."/>
            <person name="Gissot L."/>
            <person name="Palauqui J.-C."/>
            <person name="Masson P.H."/>
            <person name="Bednarek S.Y."/>
            <person name="Otegui M.S."/>
        </authorList>
    </citation>
    <scope>FUNCTION</scope>
    <scope>DISRUPTION PHENOTYPE</scope>
    <scope>DEVELOPMENTAL STAGE</scope>
    <scope>TISSUE SPECIFICITY</scope>
    <scope>INTERACTION WITH OPS</scope>
    <source>
        <strain>cv. Columbia</strain>
    </source>
</reference>
<reference key="6">
    <citation type="journal article" date="2018" name="New Phytol.">
        <title>Members of the DEAL subfamily of the DUF1218 gene family are required for bilateral symmetry but not for dorsoventrality in Arabidopsis leaves.</title>
        <authorList>
            <person name="Wilson-Sanchez D."/>
            <person name="Martinez-Lopez S."/>
            <person name="Navarro-Cartagena S."/>
            <person name="Jover-Gil S."/>
            <person name="Micol J.L."/>
        </authorList>
    </citation>
    <scope>FUNCTION</scope>
    <scope>DISRUPTION PHENOTYPE</scope>
    <scope>SUBCELLULAR LOCATION</scope>
    <scope>TISSUE SPECIFICITY</scope>
    <scope>DEVELOPMENTAL STAGE</scope>
    <scope>GENE FAMILY</scope>
    <scope>NOMENCLATURE</scope>
    <source>
        <strain>cv. Columbia</strain>
    </source>
</reference>
<reference key="7">
    <citation type="journal article" date="2020" name="New Phytol.">
        <title>Genome-wide identification of EMBRYO-DEFECTIVE (EMB) genes required for growth and development in Arabidopsis.</title>
        <authorList>
            <person name="Meinke D.W."/>
        </authorList>
    </citation>
    <scope>REVIEW ON EMBRYO-DEFECTIVE MUTANTS</scope>
</reference>
<name>DEAL1_ARATH</name>
<keyword id="KW-0217">Developmental protein</keyword>
<keyword id="KW-0256">Endoplasmic reticulum</keyword>
<keyword id="KW-0472">Membrane</keyword>
<keyword id="KW-1185">Reference proteome</keyword>
<keyword id="KW-0732">Signal</keyword>
<keyword id="KW-0812">Transmembrane</keyword>
<keyword id="KW-1133">Transmembrane helix</keyword>
<protein>
    <recommendedName>
        <fullName evidence="4">Protein VASCULATURE COMPLEXITY AND CONNECTIVITY</fullName>
    </recommendedName>
    <alternativeName>
        <fullName evidence="5">Protein DESIGUAL 1</fullName>
    </alternativeName>
</protein>
<organism>
    <name type="scientific">Arabidopsis thaliana</name>
    <name type="common">Mouse-ear cress</name>
    <dbReference type="NCBI Taxonomy" id="3702"/>
    <lineage>
        <taxon>Eukaryota</taxon>
        <taxon>Viridiplantae</taxon>
        <taxon>Streptophyta</taxon>
        <taxon>Embryophyta</taxon>
        <taxon>Tracheophyta</taxon>
        <taxon>Spermatophyta</taxon>
        <taxon>Magnoliopsida</taxon>
        <taxon>eudicotyledons</taxon>
        <taxon>Gunneridae</taxon>
        <taxon>Pentapetalae</taxon>
        <taxon>rosids</taxon>
        <taxon>malvids</taxon>
        <taxon>Brassicales</taxon>
        <taxon>Brassicaceae</taxon>
        <taxon>Camelineae</taxon>
        <taxon>Arabidopsis</taxon>
    </lineage>
</organism>
<gene>
    <name evidence="4" type="primary">VCC</name>
    <name evidence="5" type="synonym">DEAL1</name>
    <name evidence="7" type="ordered locus">At2g32280</name>
    <name evidence="8" type="ORF">T32F6.20</name>
</gene>
<proteinExistence type="evidence at protein level"/>
<dbReference type="EMBL" id="AC005700">
    <property type="protein sequence ID" value="AAC69953.1"/>
    <property type="molecule type" value="Genomic_DNA"/>
</dbReference>
<dbReference type="EMBL" id="CP002685">
    <property type="protein sequence ID" value="AEC08662.1"/>
    <property type="molecule type" value="Genomic_DNA"/>
</dbReference>
<dbReference type="EMBL" id="CP002685">
    <property type="protein sequence ID" value="ANM61199.1"/>
    <property type="molecule type" value="Genomic_DNA"/>
</dbReference>
<dbReference type="EMBL" id="BT011667">
    <property type="protein sequence ID" value="AAS47673.1"/>
    <property type="molecule type" value="mRNA"/>
</dbReference>
<dbReference type="EMBL" id="AK175644">
    <property type="protein sequence ID" value="BAD43407.1"/>
    <property type="molecule type" value="mRNA"/>
</dbReference>
<dbReference type="PIR" id="B84731">
    <property type="entry name" value="B84731"/>
</dbReference>
<dbReference type="RefSeq" id="NP_001323429.1">
    <property type="nucleotide sequence ID" value="NM_001336384.1"/>
</dbReference>
<dbReference type="RefSeq" id="NP_180787.1">
    <property type="nucleotide sequence ID" value="NM_128787.4"/>
</dbReference>
<dbReference type="FunCoup" id="Q9ZV57">
    <property type="interactions" value="353"/>
</dbReference>
<dbReference type="TCDB" id="8.A.175.1.1">
    <property type="family name" value="the vasculature complexity and connectivity (vcc) family"/>
</dbReference>
<dbReference type="PaxDb" id="3702-AT2G32280.1"/>
<dbReference type="ProteomicsDB" id="180908"/>
<dbReference type="EnsemblPlants" id="AT2G32280.1">
    <property type="protein sequence ID" value="AT2G32280.1"/>
    <property type="gene ID" value="AT2G32280"/>
</dbReference>
<dbReference type="EnsemblPlants" id="AT2G32280.2">
    <property type="protein sequence ID" value="AT2G32280.2"/>
    <property type="gene ID" value="AT2G32280"/>
</dbReference>
<dbReference type="GeneID" id="817788"/>
<dbReference type="Gramene" id="AT2G32280.1">
    <property type="protein sequence ID" value="AT2G32280.1"/>
    <property type="gene ID" value="AT2G32280"/>
</dbReference>
<dbReference type="Gramene" id="AT2G32280.2">
    <property type="protein sequence ID" value="AT2G32280.2"/>
    <property type="gene ID" value="AT2G32280"/>
</dbReference>
<dbReference type="KEGG" id="ath:AT2G32280"/>
<dbReference type="Araport" id="AT2G32280"/>
<dbReference type="TAIR" id="AT2G32280">
    <property type="gene designation" value="VCC"/>
</dbReference>
<dbReference type="eggNOG" id="ENOG502RXRV">
    <property type="taxonomic scope" value="Eukaryota"/>
</dbReference>
<dbReference type="HOGENOM" id="CLU_103513_0_0_1"/>
<dbReference type="InParanoid" id="Q9ZV57"/>
<dbReference type="OMA" id="FSHHHFF"/>
<dbReference type="OrthoDB" id="1667348at2759"/>
<dbReference type="PhylomeDB" id="Q9ZV57"/>
<dbReference type="PRO" id="PR:Q9ZV57"/>
<dbReference type="Proteomes" id="UP000006548">
    <property type="component" value="Chromosome 2"/>
</dbReference>
<dbReference type="ExpressionAtlas" id="Q9ZV57">
    <property type="expression patterns" value="baseline and differential"/>
</dbReference>
<dbReference type="GO" id="GO:0005789">
    <property type="term" value="C:endoplasmic reticulum membrane"/>
    <property type="evidence" value="ECO:0007669"/>
    <property type="project" value="UniProtKB-SubCell"/>
</dbReference>
<dbReference type="GO" id="GO:0048825">
    <property type="term" value="P:cotyledon development"/>
    <property type="evidence" value="ECO:0000315"/>
    <property type="project" value="TAIR"/>
</dbReference>
<dbReference type="GO" id="GO:0010588">
    <property type="term" value="P:cotyledon vascular tissue pattern formation"/>
    <property type="evidence" value="ECO:0000315"/>
    <property type="project" value="TAIR"/>
</dbReference>
<dbReference type="GO" id="GO:0009855">
    <property type="term" value="P:determination of bilateral symmetry"/>
    <property type="evidence" value="ECO:0000315"/>
    <property type="project" value="TAIR"/>
</dbReference>
<dbReference type="GO" id="GO:0140964">
    <property type="term" value="P:intracellular auxin homeostasis"/>
    <property type="evidence" value="ECO:0000315"/>
    <property type="project" value="UniProtKB"/>
</dbReference>
<dbReference type="GO" id="GO:0048366">
    <property type="term" value="P:leaf development"/>
    <property type="evidence" value="ECO:0000315"/>
    <property type="project" value="TAIR"/>
</dbReference>
<dbReference type="GO" id="GO:0010305">
    <property type="term" value="P:leaf vascular tissue pattern formation"/>
    <property type="evidence" value="ECO:0000315"/>
    <property type="project" value="TAIR"/>
</dbReference>
<dbReference type="GO" id="GO:0010087">
    <property type="term" value="P:phloem or xylem histogenesis"/>
    <property type="evidence" value="ECO:0000315"/>
    <property type="project" value="TAIR"/>
</dbReference>
<dbReference type="InterPro" id="IPR009606">
    <property type="entry name" value="DEAL/Modifying_wall_lignin1/2"/>
</dbReference>
<dbReference type="InterPro" id="IPR052222">
    <property type="entry name" value="DESIGUAL"/>
</dbReference>
<dbReference type="PANTHER" id="PTHR31769">
    <property type="entry name" value="OS07G0462200 PROTEIN-RELATED"/>
    <property type="match status" value="1"/>
</dbReference>
<dbReference type="Pfam" id="PF06749">
    <property type="entry name" value="DUF1218"/>
    <property type="match status" value="1"/>
</dbReference>
<feature type="signal peptide" evidence="1">
    <location>
        <begin position="1"/>
        <end position="27"/>
    </location>
</feature>
<feature type="chain" id="PRO_0000454967" description="Protein VASCULATURE COMPLEXITY AND CONNECTIVITY">
    <location>
        <begin position="28"/>
        <end position="163"/>
    </location>
</feature>
<feature type="transmembrane region" description="Helical" evidence="1">
    <location>
        <begin position="54"/>
        <end position="74"/>
    </location>
</feature>
<feature type="transmembrane region" description="Helical" evidence="1">
    <location>
        <begin position="95"/>
        <end position="115"/>
    </location>
</feature>
<feature type="transmembrane region" description="Helical" evidence="1">
    <location>
        <begin position="133"/>
        <end position="153"/>
    </location>
</feature>
<evidence type="ECO:0000255" key="1"/>
<evidence type="ECO:0000269" key="2">
    <source>
    </source>
</evidence>
<evidence type="ECO:0000269" key="3">
    <source>
    </source>
</evidence>
<evidence type="ECO:0000303" key="4">
    <source>
    </source>
</evidence>
<evidence type="ECO:0000303" key="5">
    <source>
    </source>
</evidence>
<evidence type="ECO:0000305" key="6"/>
<evidence type="ECO:0000312" key="7">
    <source>
        <dbReference type="Araport" id="AT2G32280"/>
    </source>
</evidence>
<evidence type="ECO:0000312" key="8">
    <source>
        <dbReference type="EMBL" id="AAC69953.1"/>
    </source>
</evidence>